<proteinExistence type="inferred from homology"/>
<sequence length="408" mass="43836">MDTIKVLNNKNITDVPYFKAIGVASGIKGNNKSDLCVIYSEKPCIAAGTFTTNKVKAAPVLLDLKHIESENIYAIVANSGNANACTGDDGYEKAYLMAECTAKHLKIKPEEVLVASTGVIGVPLPIDKVMFGIEKAFSILPKSDANKAIDAIMTTDTVQKKIFVEFMLDKKKVTICAIAKGSGMIHPNMATMLSFIVTDANITKDLLNKALKESVKDSYNMISVDRDTSTNDMALLLANGASGNTLISSENSDYEVFKKALHYVNVEISKMIAKDGEGATKLIEAKVFGASSSRDAKVAAKSVITSNLVKAAVFGSDANWGRIICALGYSAAEIDPSKVDISFSNNDSKVETCLKGTGLNFDEEAAKKILDGDHVIIEVNLNNGKFNATAWGCDLTYDYVKINGSYRS</sequence>
<evidence type="ECO:0000255" key="1">
    <source>
        <dbReference type="HAMAP-Rule" id="MF_01106"/>
    </source>
</evidence>
<comment type="function">
    <text evidence="1">Catalyzes two activities which are involved in the cyclic version of arginine biosynthesis: the synthesis of N-acetylglutamate from glutamate and acetyl-CoA as the acetyl donor, and of ornithine by transacetylation between N(2)-acetylornithine and glutamate.</text>
</comment>
<comment type="catalytic activity">
    <reaction evidence="1">
        <text>N(2)-acetyl-L-ornithine + L-glutamate = N-acetyl-L-glutamate + L-ornithine</text>
        <dbReference type="Rhea" id="RHEA:15349"/>
        <dbReference type="ChEBI" id="CHEBI:29985"/>
        <dbReference type="ChEBI" id="CHEBI:44337"/>
        <dbReference type="ChEBI" id="CHEBI:46911"/>
        <dbReference type="ChEBI" id="CHEBI:57805"/>
        <dbReference type="EC" id="2.3.1.35"/>
    </reaction>
</comment>
<comment type="catalytic activity">
    <reaction evidence="1">
        <text>L-glutamate + acetyl-CoA = N-acetyl-L-glutamate + CoA + H(+)</text>
        <dbReference type="Rhea" id="RHEA:24292"/>
        <dbReference type="ChEBI" id="CHEBI:15378"/>
        <dbReference type="ChEBI" id="CHEBI:29985"/>
        <dbReference type="ChEBI" id="CHEBI:44337"/>
        <dbReference type="ChEBI" id="CHEBI:57287"/>
        <dbReference type="ChEBI" id="CHEBI:57288"/>
        <dbReference type="EC" id="2.3.1.1"/>
    </reaction>
</comment>
<comment type="pathway">
    <text evidence="1">Amino-acid biosynthesis; L-arginine biosynthesis; L-ornithine and N-acetyl-L-glutamate from L-glutamate and N(2)-acetyl-L-ornithine (cyclic): step 1/1.</text>
</comment>
<comment type="pathway">
    <text evidence="1">Amino-acid biosynthesis; L-arginine biosynthesis; N(2)-acetyl-L-ornithine from L-glutamate: step 1/4.</text>
</comment>
<comment type="subunit">
    <text evidence="1">Heterotetramer of two alpha and two beta chains.</text>
</comment>
<comment type="subcellular location">
    <subcellularLocation>
        <location evidence="1">Cytoplasm</location>
    </subcellularLocation>
</comment>
<comment type="similarity">
    <text evidence="1">Belongs to the ArgJ family.</text>
</comment>
<feature type="chain" id="PRO_0000002151" description="Arginine biosynthesis bifunctional protein ArgJ alpha chain 1" evidence="1">
    <location>
        <begin position="1"/>
        <end position="190"/>
    </location>
</feature>
<feature type="chain" id="PRO_0000002152" description="Arginine biosynthesis bifunctional protein ArgJ beta chain 1" evidence="1">
    <location>
        <begin position="191"/>
        <end position="408"/>
    </location>
</feature>
<feature type="active site" description="Nucleophile" evidence="1">
    <location>
        <position position="191"/>
    </location>
</feature>
<feature type="binding site" evidence="1">
    <location>
        <position position="154"/>
    </location>
    <ligand>
        <name>substrate</name>
    </ligand>
</feature>
<feature type="binding site" evidence="1">
    <location>
        <position position="180"/>
    </location>
    <ligand>
        <name>substrate</name>
    </ligand>
</feature>
<feature type="binding site" evidence="1">
    <location>
        <position position="191"/>
    </location>
    <ligand>
        <name>substrate</name>
    </ligand>
</feature>
<feature type="binding site" evidence="1">
    <location>
        <position position="277"/>
    </location>
    <ligand>
        <name>substrate</name>
    </ligand>
</feature>
<feature type="binding site" evidence="1">
    <location>
        <position position="403"/>
    </location>
    <ligand>
        <name>substrate</name>
    </ligand>
</feature>
<feature type="binding site" evidence="1">
    <location>
        <position position="408"/>
    </location>
    <ligand>
        <name>substrate</name>
    </ligand>
</feature>
<feature type="site" description="Involved in the stabilization of negative charge on the oxyanion by the formation of the oxyanion hole" evidence="1">
    <location>
        <position position="117"/>
    </location>
</feature>
<feature type="site" description="Involved in the stabilization of negative charge on the oxyanion by the formation of the oxyanion hole" evidence="1">
    <location>
        <position position="118"/>
    </location>
</feature>
<feature type="site" description="Cleavage; by autolysis" evidence="1">
    <location>
        <begin position="190"/>
        <end position="191"/>
    </location>
</feature>
<organism>
    <name type="scientific">Clostridium acetobutylicum (strain ATCC 824 / DSM 792 / JCM 1419 / IAM 19013 / LMG 5710 / NBRC 13948 / NRRL B-527 / VKM B-1787 / 2291 / W)</name>
    <dbReference type="NCBI Taxonomy" id="272562"/>
    <lineage>
        <taxon>Bacteria</taxon>
        <taxon>Bacillati</taxon>
        <taxon>Bacillota</taxon>
        <taxon>Clostridia</taxon>
        <taxon>Eubacteriales</taxon>
        <taxon>Clostridiaceae</taxon>
        <taxon>Clostridium</taxon>
    </lineage>
</organism>
<name>ARGJ1_CLOAB</name>
<gene>
    <name evidence="1" type="primary">argJ1</name>
    <name type="ordered locus">CA_C2391</name>
</gene>
<keyword id="KW-0012">Acyltransferase</keyword>
<keyword id="KW-0028">Amino-acid biosynthesis</keyword>
<keyword id="KW-0055">Arginine biosynthesis</keyword>
<keyword id="KW-0068">Autocatalytic cleavage</keyword>
<keyword id="KW-0963">Cytoplasm</keyword>
<keyword id="KW-0511">Multifunctional enzyme</keyword>
<keyword id="KW-1185">Reference proteome</keyword>
<keyword id="KW-0808">Transferase</keyword>
<accession>Q97GH6</accession>
<dbReference type="EC" id="2.3.1.35" evidence="1"/>
<dbReference type="EC" id="2.3.1.1" evidence="1"/>
<dbReference type="EMBL" id="AE001437">
    <property type="protein sequence ID" value="AAK80346.1"/>
    <property type="molecule type" value="Genomic_DNA"/>
</dbReference>
<dbReference type="PIR" id="G97194">
    <property type="entry name" value="G97194"/>
</dbReference>
<dbReference type="RefSeq" id="NP_349006.1">
    <property type="nucleotide sequence ID" value="NC_003030.1"/>
</dbReference>
<dbReference type="SMR" id="Q97GH6"/>
<dbReference type="STRING" id="272562.CA_C2391"/>
<dbReference type="MEROPS" id="T05.002"/>
<dbReference type="KEGG" id="cac:CA_C2391"/>
<dbReference type="PATRIC" id="fig|272562.8.peg.2588"/>
<dbReference type="eggNOG" id="COG1364">
    <property type="taxonomic scope" value="Bacteria"/>
</dbReference>
<dbReference type="HOGENOM" id="CLU_027172_1_0_9"/>
<dbReference type="OrthoDB" id="9804242at2"/>
<dbReference type="UniPathway" id="UPA00068">
    <property type="reaction ID" value="UER00106"/>
</dbReference>
<dbReference type="UniPathway" id="UPA00068">
    <property type="reaction ID" value="UER00111"/>
</dbReference>
<dbReference type="Proteomes" id="UP000000814">
    <property type="component" value="Chromosome"/>
</dbReference>
<dbReference type="GO" id="GO:0005737">
    <property type="term" value="C:cytoplasm"/>
    <property type="evidence" value="ECO:0007669"/>
    <property type="project" value="UniProtKB-SubCell"/>
</dbReference>
<dbReference type="GO" id="GO:0004358">
    <property type="term" value="F:glutamate N-acetyltransferase activity"/>
    <property type="evidence" value="ECO:0007669"/>
    <property type="project" value="UniProtKB-UniRule"/>
</dbReference>
<dbReference type="GO" id="GO:0004042">
    <property type="term" value="F:L-glutamate N-acetyltransferase activity"/>
    <property type="evidence" value="ECO:0007669"/>
    <property type="project" value="UniProtKB-UniRule"/>
</dbReference>
<dbReference type="GO" id="GO:0006526">
    <property type="term" value="P:L-arginine biosynthetic process"/>
    <property type="evidence" value="ECO:0007669"/>
    <property type="project" value="UniProtKB-UniRule"/>
</dbReference>
<dbReference type="GO" id="GO:0006592">
    <property type="term" value="P:ornithine biosynthetic process"/>
    <property type="evidence" value="ECO:0007669"/>
    <property type="project" value="TreeGrafter"/>
</dbReference>
<dbReference type="CDD" id="cd02152">
    <property type="entry name" value="OAT"/>
    <property type="match status" value="1"/>
</dbReference>
<dbReference type="FunFam" id="3.10.20.340:FF:000001">
    <property type="entry name" value="Arginine biosynthesis bifunctional protein ArgJ, chloroplastic"/>
    <property type="match status" value="1"/>
</dbReference>
<dbReference type="FunFam" id="3.60.70.12:FF:000001">
    <property type="entry name" value="Arginine biosynthesis bifunctional protein ArgJ, chloroplastic"/>
    <property type="match status" value="1"/>
</dbReference>
<dbReference type="Gene3D" id="3.10.20.340">
    <property type="entry name" value="ArgJ beta chain, C-terminal domain"/>
    <property type="match status" value="1"/>
</dbReference>
<dbReference type="Gene3D" id="3.60.70.12">
    <property type="entry name" value="L-amino peptidase D-ALA esterase/amidase"/>
    <property type="match status" value="1"/>
</dbReference>
<dbReference type="HAMAP" id="MF_01106">
    <property type="entry name" value="ArgJ"/>
    <property type="match status" value="1"/>
</dbReference>
<dbReference type="InterPro" id="IPR002813">
    <property type="entry name" value="Arg_biosynth_ArgJ"/>
</dbReference>
<dbReference type="InterPro" id="IPR016117">
    <property type="entry name" value="ArgJ-like_dom_sf"/>
</dbReference>
<dbReference type="InterPro" id="IPR042195">
    <property type="entry name" value="ArgJ_beta_C"/>
</dbReference>
<dbReference type="NCBIfam" id="TIGR00120">
    <property type="entry name" value="ArgJ"/>
    <property type="match status" value="1"/>
</dbReference>
<dbReference type="NCBIfam" id="NF003802">
    <property type="entry name" value="PRK05388.1"/>
    <property type="match status" value="1"/>
</dbReference>
<dbReference type="PANTHER" id="PTHR23100">
    <property type="entry name" value="ARGININE BIOSYNTHESIS BIFUNCTIONAL PROTEIN ARGJ"/>
    <property type="match status" value="1"/>
</dbReference>
<dbReference type="PANTHER" id="PTHR23100:SF0">
    <property type="entry name" value="ARGININE BIOSYNTHESIS BIFUNCTIONAL PROTEIN ARGJ, MITOCHONDRIAL"/>
    <property type="match status" value="1"/>
</dbReference>
<dbReference type="Pfam" id="PF01960">
    <property type="entry name" value="ArgJ"/>
    <property type="match status" value="1"/>
</dbReference>
<dbReference type="SUPFAM" id="SSF56266">
    <property type="entry name" value="DmpA/ArgJ-like"/>
    <property type="match status" value="1"/>
</dbReference>
<protein>
    <recommendedName>
        <fullName evidence="1">Arginine biosynthesis bifunctional protein ArgJ 1</fullName>
    </recommendedName>
    <domain>
        <recommendedName>
            <fullName evidence="1">Glutamate N-acetyltransferase 1</fullName>
            <ecNumber evidence="1">2.3.1.35</ecNumber>
        </recommendedName>
        <alternativeName>
            <fullName evidence="1">Ornithine acetyltransferase 1</fullName>
            <shortName evidence="1">OATase 1</shortName>
        </alternativeName>
        <alternativeName>
            <fullName evidence="1">Ornithine transacetylase 1</fullName>
        </alternativeName>
    </domain>
    <domain>
        <recommendedName>
            <fullName evidence="1">Amino-acid acetyltransferase 1</fullName>
            <ecNumber evidence="1">2.3.1.1</ecNumber>
        </recommendedName>
        <alternativeName>
            <fullName evidence="1">N-acetylglutamate synthase 1</fullName>
            <shortName evidence="1">AGSase 1</shortName>
        </alternativeName>
    </domain>
    <component>
        <recommendedName>
            <fullName evidence="1">Arginine biosynthesis bifunctional protein ArgJ alpha chain 1</fullName>
        </recommendedName>
    </component>
    <component>
        <recommendedName>
            <fullName evidence="1">Arginine biosynthesis bifunctional protein ArgJ beta chain 1</fullName>
        </recommendedName>
    </component>
</protein>
<reference key="1">
    <citation type="journal article" date="2001" name="J. Bacteriol.">
        <title>Genome sequence and comparative analysis of the solvent-producing bacterium Clostridium acetobutylicum.</title>
        <authorList>
            <person name="Noelling J."/>
            <person name="Breton G."/>
            <person name="Omelchenko M.V."/>
            <person name="Makarova K.S."/>
            <person name="Zeng Q."/>
            <person name="Gibson R."/>
            <person name="Lee H.M."/>
            <person name="Dubois J."/>
            <person name="Qiu D."/>
            <person name="Hitti J."/>
            <person name="Wolf Y.I."/>
            <person name="Tatusov R.L."/>
            <person name="Sabathe F."/>
            <person name="Doucette-Stamm L.A."/>
            <person name="Soucaille P."/>
            <person name="Daly M.J."/>
            <person name="Bennett G.N."/>
            <person name="Koonin E.V."/>
            <person name="Smith D.R."/>
        </authorList>
    </citation>
    <scope>NUCLEOTIDE SEQUENCE [LARGE SCALE GENOMIC DNA]</scope>
    <source>
        <strain>ATCC 824 / DSM 792 / JCM 1419 / IAM 19013 / LMG 5710 / NBRC 13948 / NRRL B-527 / VKM B-1787 / 2291 / W</strain>
    </source>
</reference>